<accession>B8FT31</accession>
<evidence type="ECO:0000255" key="1">
    <source>
        <dbReference type="HAMAP-Rule" id="MF_00712"/>
    </source>
</evidence>
<protein>
    <recommendedName>
        <fullName evidence="1">Probable glycine dehydrogenase (decarboxylating) subunit 1</fullName>
        <ecNumber evidence="1">1.4.4.2</ecNumber>
    </recommendedName>
    <alternativeName>
        <fullName evidence="1">Glycine cleavage system P-protein subunit 1</fullName>
    </alternativeName>
    <alternativeName>
        <fullName evidence="1">Glycine decarboxylase subunit 1</fullName>
    </alternativeName>
    <alternativeName>
        <fullName evidence="1">Glycine dehydrogenase (aminomethyl-transferring) subunit 1</fullName>
    </alternativeName>
</protein>
<name>GCSPA_DESHD</name>
<comment type="function">
    <text evidence="1">The glycine cleavage system catalyzes the degradation of glycine. The P protein binds the alpha-amino group of glycine through its pyridoxal phosphate cofactor; CO(2) is released and the remaining methylamine moiety is then transferred to the lipoamide cofactor of the H protein.</text>
</comment>
<comment type="catalytic activity">
    <reaction evidence="1">
        <text>N(6)-[(R)-lipoyl]-L-lysyl-[glycine-cleavage complex H protein] + glycine + H(+) = N(6)-[(R)-S(8)-aminomethyldihydrolipoyl]-L-lysyl-[glycine-cleavage complex H protein] + CO2</text>
        <dbReference type="Rhea" id="RHEA:24304"/>
        <dbReference type="Rhea" id="RHEA-COMP:10494"/>
        <dbReference type="Rhea" id="RHEA-COMP:10495"/>
        <dbReference type="ChEBI" id="CHEBI:15378"/>
        <dbReference type="ChEBI" id="CHEBI:16526"/>
        <dbReference type="ChEBI" id="CHEBI:57305"/>
        <dbReference type="ChEBI" id="CHEBI:83099"/>
        <dbReference type="ChEBI" id="CHEBI:83143"/>
        <dbReference type="EC" id="1.4.4.2"/>
    </reaction>
</comment>
<comment type="subunit">
    <text evidence="1">The glycine cleavage system is composed of four proteins: P, T, L and H. In this organism, the P 'protein' is a heterodimer of two subunits.</text>
</comment>
<comment type="similarity">
    <text evidence="1">Belongs to the GcvP family. N-terminal subunit subfamily.</text>
</comment>
<gene>
    <name evidence="1" type="primary">gcvPA</name>
    <name type="ordered locus">Dhaf_4037</name>
</gene>
<proteinExistence type="inferred from homology"/>
<reference key="1">
    <citation type="journal article" date="2012" name="BMC Microbiol.">
        <title>Genome sequence of Desulfitobacterium hafniense DCB-2, a Gram-positive anaerobe capable of dehalogenation and metal reduction.</title>
        <authorList>
            <person name="Kim S.H."/>
            <person name="Harzman C."/>
            <person name="Davis J.K."/>
            <person name="Hutcheson R."/>
            <person name="Broderick J.B."/>
            <person name="Marsh T.L."/>
            <person name="Tiedje J.M."/>
        </authorList>
    </citation>
    <scope>NUCLEOTIDE SEQUENCE [LARGE SCALE GENOMIC DNA]</scope>
    <source>
        <strain>DSM 10664 / DCB-2</strain>
    </source>
</reference>
<organism>
    <name type="scientific">Desulfitobacterium hafniense (strain DSM 10664 / DCB-2)</name>
    <dbReference type="NCBI Taxonomy" id="272564"/>
    <lineage>
        <taxon>Bacteria</taxon>
        <taxon>Bacillati</taxon>
        <taxon>Bacillota</taxon>
        <taxon>Clostridia</taxon>
        <taxon>Eubacteriales</taxon>
        <taxon>Desulfitobacteriaceae</taxon>
        <taxon>Desulfitobacterium</taxon>
    </lineage>
</organism>
<keyword id="KW-0560">Oxidoreductase</keyword>
<dbReference type="EC" id="1.4.4.2" evidence="1"/>
<dbReference type="EMBL" id="CP001336">
    <property type="protein sequence ID" value="ACL22047.1"/>
    <property type="molecule type" value="Genomic_DNA"/>
</dbReference>
<dbReference type="RefSeq" id="WP_005811332.1">
    <property type="nucleotide sequence ID" value="NC_011830.1"/>
</dbReference>
<dbReference type="SMR" id="B8FT31"/>
<dbReference type="KEGG" id="dhd:Dhaf_4037"/>
<dbReference type="HOGENOM" id="CLU_004620_0_2_9"/>
<dbReference type="Proteomes" id="UP000007726">
    <property type="component" value="Chromosome"/>
</dbReference>
<dbReference type="GO" id="GO:0004375">
    <property type="term" value="F:glycine dehydrogenase (decarboxylating) activity"/>
    <property type="evidence" value="ECO:0007669"/>
    <property type="project" value="UniProtKB-EC"/>
</dbReference>
<dbReference type="GO" id="GO:0019464">
    <property type="term" value="P:glycine decarboxylation via glycine cleavage system"/>
    <property type="evidence" value="ECO:0007669"/>
    <property type="project" value="UniProtKB-UniRule"/>
</dbReference>
<dbReference type="GO" id="GO:0009116">
    <property type="term" value="P:nucleoside metabolic process"/>
    <property type="evidence" value="ECO:0007669"/>
    <property type="project" value="InterPro"/>
</dbReference>
<dbReference type="CDD" id="cd00613">
    <property type="entry name" value="GDC-P"/>
    <property type="match status" value="1"/>
</dbReference>
<dbReference type="Gene3D" id="3.90.1150.10">
    <property type="entry name" value="Aspartate Aminotransferase, domain 1"/>
    <property type="match status" value="1"/>
</dbReference>
<dbReference type="Gene3D" id="3.40.640.10">
    <property type="entry name" value="Type I PLP-dependent aspartate aminotransferase-like (Major domain)"/>
    <property type="match status" value="1"/>
</dbReference>
<dbReference type="HAMAP" id="MF_00712">
    <property type="entry name" value="GcvPA"/>
    <property type="match status" value="1"/>
</dbReference>
<dbReference type="InterPro" id="IPR023010">
    <property type="entry name" value="GcvPA"/>
</dbReference>
<dbReference type="InterPro" id="IPR049315">
    <property type="entry name" value="GDC-P_N"/>
</dbReference>
<dbReference type="InterPro" id="IPR020581">
    <property type="entry name" value="GDC_P"/>
</dbReference>
<dbReference type="InterPro" id="IPR015424">
    <property type="entry name" value="PyrdxlP-dep_Trfase"/>
</dbReference>
<dbReference type="InterPro" id="IPR015421">
    <property type="entry name" value="PyrdxlP-dep_Trfase_major"/>
</dbReference>
<dbReference type="InterPro" id="IPR015422">
    <property type="entry name" value="PyrdxlP-dep_Trfase_small"/>
</dbReference>
<dbReference type="NCBIfam" id="NF001696">
    <property type="entry name" value="PRK00451.1"/>
    <property type="match status" value="1"/>
</dbReference>
<dbReference type="PANTHER" id="PTHR42806">
    <property type="entry name" value="GLYCINE CLEAVAGE SYSTEM P-PROTEIN"/>
    <property type="match status" value="1"/>
</dbReference>
<dbReference type="PANTHER" id="PTHR42806:SF1">
    <property type="entry name" value="GLYCINE DEHYDROGENASE (DECARBOXYLATING)"/>
    <property type="match status" value="1"/>
</dbReference>
<dbReference type="Pfam" id="PF02347">
    <property type="entry name" value="GDC-P"/>
    <property type="match status" value="1"/>
</dbReference>
<dbReference type="PIRSF" id="PIRSF006815">
    <property type="entry name" value="GcvPA"/>
    <property type="match status" value="1"/>
</dbReference>
<dbReference type="SUPFAM" id="SSF53383">
    <property type="entry name" value="PLP-dependent transferases"/>
    <property type="match status" value="1"/>
</dbReference>
<feature type="chain" id="PRO_1000147983" description="Probable glycine dehydrogenase (decarboxylating) subunit 1">
    <location>
        <begin position="1"/>
        <end position="446"/>
    </location>
</feature>
<sequence>MNYVPNTVDQQEQILTRIGVGSLEELFADIPESVRRQAQLKIREGLSELELVKYMGRLAAENKTVEEYTSYLGAGAYEHFIPSYVDQLLLRSEFYTAYTPYQPEISQGTLQAIYEFQTLVCELTGMDGANASMYDGASALAEAALMSCDATRRKKVLVPQTIHPEYREVLRTYLLPRGVEILEIPYQEGAVDSEALEKALNTEVAAVLIQSPNFFGMIEKAVEIGQMAHAKGGLLVMAVNPVSLGLLKSPGELGADIVVGEGQPFGNPLNFGGPYLGFLACREKYVRRMPGRIVGATKDKNGKKGYVLTLQAREQHIRREKAASNICSNEALCALAFTIHLSGLGKRGLKEMARLNLQKAHYGAEEIGKLPGMSLAFQGPFFHEFVIKTEVSPRKINEALLSHKIIGGLELSRFYPELDQHLLFCVTETKTKEDIDRLVAGMGEIK</sequence>